<organism>
    <name type="scientific">Rattus norvegicus</name>
    <name type="common">Rat</name>
    <dbReference type="NCBI Taxonomy" id="10116"/>
    <lineage>
        <taxon>Eukaryota</taxon>
        <taxon>Metazoa</taxon>
        <taxon>Chordata</taxon>
        <taxon>Craniata</taxon>
        <taxon>Vertebrata</taxon>
        <taxon>Euteleostomi</taxon>
        <taxon>Mammalia</taxon>
        <taxon>Eutheria</taxon>
        <taxon>Euarchontoglires</taxon>
        <taxon>Glires</taxon>
        <taxon>Rodentia</taxon>
        <taxon>Myomorpha</taxon>
        <taxon>Muroidea</taxon>
        <taxon>Muridae</taxon>
        <taxon>Murinae</taxon>
        <taxon>Rattus</taxon>
    </lineage>
</organism>
<gene>
    <name type="primary">Mapre2</name>
</gene>
<reference key="1">
    <citation type="journal article" date="2004" name="Genome Res.">
        <title>The status, quality, and expansion of the NIH full-length cDNA project: the Mammalian Gene Collection (MGC).</title>
        <authorList>
            <consortium name="The MGC Project Team"/>
        </authorList>
    </citation>
    <scope>NUCLEOTIDE SEQUENCE [LARGE SCALE MRNA]</scope>
    <source>
        <tissue>Lung</tissue>
    </source>
</reference>
<reference key="2">
    <citation type="journal article" date="2012" name="Nat. Commun.">
        <title>Quantitative maps of protein phosphorylation sites across 14 different rat organs and tissues.</title>
        <authorList>
            <person name="Lundby A."/>
            <person name="Secher A."/>
            <person name="Lage K."/>
            <person name="Nordsborg N.B."/>
            <person name="Dmytriyev A."/>
            <person name="Lundby C."/>
            <person name="Olsen J.V."/>
        </authorList>
    </citation>
    <scope>PHOSPHORYLATION [LARGE SCALE ANALYSIS] AT SER-9</scope>
    <scope>IDENTIFICATION BY MASS SPECTROMETRY [LARGE SCALE ANALYSIS]</scope>
</reference>
<feature type="chain" id="PRO_0000240312" description="Microtubule-associated protein RP/EB family member 2">
    <location>
        <begin position="1"/>
        <end position="326"/>
    </location>
</feature>
<feature type="domain" description="Calponin-homology (CH)" evidence="4">
    <location>
        <begin position="56"/>
        <end position="158"/>
    </location>
</feature>
<feature type="domain" description="EB1 C-terminal" evidence="5">
    <location>
        <begin position="235"/>
        <end position="305"/>
    </location>
</feature>
<feature type="region of interest" description="Disordered" evidence="6">
    <location>
        <begin position="170"/>
        <end position="239"/>
    </location>
</feature>
<feature type="region of interest" description="DCTN1-binding" evidence="1">
    <location>
        <begin position="186"/>
        <end position="326"/>
    </location>
</feature>
<feature type="region of interest" description="APC-binding" evidence="1">
    <location>
        <begin position="258"/>
        <end position="301"/>
    </location>
</feature>
<feature type="region of interest" description="Disordered" evidence="6">
    <location>
        <begin position="297"/>
        <end position="326"/>
    </location>
</feature>
<feature type="compositionally biased region" description="Low complexity" evidence="6">
    <location>
        <begin position="199"/>
        <end position="233"/>
    </location>
</feature>
<feature type="compositionally biased region" description="Acidic residues" evidence="6">
    <location>
        <begin position="300"/>
        <end position="312"/>
    </location>
</feature>
<feature type="compositionally biased region" description="Low complexity" evidence="6">
    <location>
        <begin position="317"/>
        <end position="326"/>
    </location>
</feature>
<feature type="modified residue" description="Phosphoserine" evidence="8">
    <location>
        <position position="9"/>
    </location>
</feature>
<feature type="modified residue" description="Phosphotyrosine" evidence="2">
    <location>
        <position position="166"/>
    </location>
</feature>
<feature type="modified residue" description="Phosphoserine" evidence="2">
    <location>
        <position position="218"/>
    </location>
</feature>
<feature type="modified residue" description="Phosphoserine" evidence="2">
    <location>
        <position position="235"/>
    </location>
</feature>
<comment type="function">
    <text evidence="2">Adapter protein that is involved in microtubule polymerization, and spindle function by stabilizing microtubules and anchoring them at centrosomes. Therefore, ensures mitotic progression and genome stability (By similarity). Acts as a central regulator of microtubule reorganization in apico-basal epithelial differentiation (By similarity). Plays a role during oocyte meiosis by regulating microtubule dynamics (By similarity). Participates in neurite growth by interacting with plexin B3/PLXNB3 and microtubule reorganization during apico-basal epithelial differentiation. Also plays an essential role for cell migration and focal adhesion dynamics. Mechanistically, recruits HAX1 to microtubules in order to regulate focal adhesion dynamics (By similarity).</text>
</comment>
<comment type="subunit">
    <text evidence="2">Interacts with DCTN1. Interacts with APC (via C-terminal). Interacts with monomeric and polymerized tubulin. Interacts with SLAIN1. Interacts (via the N-terminal region) with BAG1 (By similarity). Interacts with ASB14 (By similarity). Interacts with HAX1; this interaction is essential for epidermal cell migration (By similarity).</text>
</comment>
<comment type="subcellular location">
    <subcellularLocation>
        <location evidence="1">Cytoplasm</location>
    </subcellularLocation>
    <subcellularLocation>
        <location evidence="1">Cytoplasm</location>
        <location evidence="1">Cytoskeleton</location>
    </subcellularLocation>
    <text evidence="1">Associated with the microtubule network. Accumulates at the plus end of microtubules (By similarity).</text>
</comment>
<comment type="domain">
    <text evidence="1">Composed of two functionally independent domains. The N-terminal domain forms a hydrophobic cleft involved in microtubule binding and the C-terminal is involved in the formation of mutually exclusive complexes with APC and DCTN1 (By similarity).</text>
</comment>
<comment type="PTM">
    <text evidence="2">Phosphorylated at Ser-235 by CK2 leading to enhanced cell adhesion. Phosphorylated by CDK1 and AURKB during mitosis reduces the binding affinity of MAPRE2 for microtubules.</text>
</comment>
<comment type="PTM">
    <text evidence="3">Ubiquitinated in an ASB14-dependent manner; leading to proteasomal degradation.</text>
</comment>
<comment type="similarity">
    <text evidence="7">Belongs to the MAPRE family.</text>
</comment>
<sequence>MPGPTQTLSPNGENNNDIIQDNGTIIPFRKHTVRGERSYSWGMAVNVYSTSITQETMSRHDIIAWVNDIVSLNYTKVEQLCSGAAYCQFMDMLFPGCISLKKVKFQAKLEHEYIHNFKLLQASFKRMNVDKVIPVEKLVKGRFQDNLDFIQWFKKFYDANYDGKEYDPVEARQGQDAIPPPDPGEQIFNLPKKSHHANSPTAGAAKSSPAAKPGSTPSRPSSAKRASSSGSASRSDKDLETQVIQLNEQVHSLKLALEGVEKERDFYFGKLREIELLCQEHGQENDDLVQRLMEVLYASDEQEGQTEEPEVEEQTHDQQPQQQEEY</sequence>
<dbReference type="EMBL" id="BC105879">
    <property type="protein sequence ID" value="AAI05880.1"/>
    <property type="molecule type" value="mRNA"/>
</dbReference>
<dbReference type="RefSeq" id="NP_001094470.1">
    <property type="nucleotide sequence ID" value="NM_001101000.1"/>
</dbReference>
<dbReference type="SMR" id="Q3B8Q0"/>
<dbReference type="BioGRID" id="594167">
    <property type="interactions" value="3"/>
</dbReference>
<dbReference type="FunCoup" id="Q3B8Q0">
    <property type="interactions" value="2048"/>
</dbReference>
<dbReference type="IntAct" id="Q3B8Q0">
    <property type="interactions" value="1"/>
</dbReference>
<dbReference type="STRING" id="10116.ENSRNOP00000065460"/>
<dbReference type="GlyGen" id="Q3B8Q0">
    <property type="glycosylation" value="2 sites"/>
</dbReference>
<dbReference type="iPTMnet" id="Q3B8Q0"/>
<dbReference type="PhosphoSitePlus" id="Q3B8Q0"/>
<dbReference type="jPOST" id="Q3B8Q0"/>
<dbReference type="PaxDb" id="10116-ENSRNOP00000065460"/>
<dbReference type="GeneID" id="679221"/>
<dbReference type="KEGG" id="rno:679221"/>
<dbReference type="AGR" id="RGD:1590736"/>
<dbReference type="CTD" id="10982"/>
<dbReference type="RGD" id="1590736">
    <property type="gene designation" value="Mapre2"/>
</dbReference>
<dbReference type="eggNOG" id="KOG3000">
    <property type="taxonomic scope" value="Eukaryota"/>
</dbReference>
<dbReference type="InParanoid" id="Q3B8Q0"/>
<dbReference type="OrthoDB" id="2119228at2759"/>
<dbReference type="PhylomeDB" id="Q3B8Q0"/>
<dbReference type="PRO" id="PR:Q3B8Q0"/>
<dbReference type="Proteomes" id="UP000002494">
    <property type="component" value="Unplaced"/>
</dbReference>
<dbReference type="GO" id="GO:0005881">
    <property type="term" value="C:cytoplasmic microtubule"/>
    <property type="evidence" value="ECO:0000318"/>
    <property type="project" value="GO_Central"/>
</dbReference>
<dbReference type="GO" id="GO:0005925">
    <property type="term" value="C:focal adhesion"/>
    <property type="evidence" value="ECO:0000266"/>
    <property type="project" value="RGD"/>
</dbReference>
<dbReference type="GO" id="GO:0005815">
    <property type="term" value="C:microtubule organizing center"/>
    <property type="evidence" value="ECO:0000318"/>
    <property type="project" value="GO_Central"/>
</dbReference>
<dbReference type="GO" id="GO:0035371">
    <property type="term" value="C:microtubule plus-end"/>
    <property type="evidence" value="ECO:0000318"/>
    <property type="project" value="GO_Central"/>
</dbReference>
<dbReference type="GO" id="GO:0051233">
    <property type="term" value="C:spindle midzone"/>
    <property type="evidence" value="ECO:0000318"/>
    <property type="project" value="GO_Central"/>
</dbReference>
<dbReference type="GO" id="GO:0042802">
    <property type="term" value="F:identical protein binding"/>
    <property type="evidence" value="ECO:0000266"/>
    <property type="project" value="RGD"/>
</dbReference>
<dbReference type="GO" id="GO:0008017">
    <property type="term" value="F:microtubule binding"/>
    <property type="evidence" value="ECO:0000266"/>
    <property type="project" value="RGD"/>
</dbReference>
<dbReference type="GO" id="GO:0051010">
    <property type="term" value="F:microtubule plus-end binding"/>
    <property type="evidence" value="ECO:0000266"/>
    <property type="project" value="RGD"/>
</dbReference>
<dbReference type="GO" id="GO:0019901">
    <property type="term" value="F:protein kinase binding"/>
    <property type="evidence" value="ECO:0000266"/>
    <property type="project" value="RGD"/>
</dbReference>
<dbReference type="GO" id="GO:0051301">
    <property type="term" value="P:cell division"/>
    <property type="evidence" value="ECO:0007669"/>
    <property type="project" value="UniProtKB-KW"/>
</dbReference>
<dbReference type="GO" id="GO:0032014">
    <property type="term" value="P:positive regulation of ARF protein signal transduction"/>
    <property type="evidence" value="ECO:0000266"/>
    <property type="project" value="RGD"/>
</dbReference>
<dbReference type="GO" id="GO:0120183">
    <property type="term" value="P:positive regulation of focal adhesion disassembly"/>
    <property type="evidence" value="ECO:0000266"/>
    <property type="project" value="RGD"/>
</dbReference>
<dbReference type="GO" id="GO:0051549">
    <property type="term" value="P:positive regulation of keratinocyte migration"/>
    <property type="evidence" value="ECO:0000266"/>
    <property type="project" value="RGD"/>
</dbReference>
<dbReference type="GO" id="GO:0035372">
    <property type="term" value="P:protein localization to microtubule"/>
    <property type="evidence" value="ECO:0000318"/>
    <property type="project" value="GO_Central"/>
</dbReference>
<dbReference type="GO" id="GO:0031110">
    <property type="term" value="P:regulation of microtubule polymerization or depolymerization"/>
    <property type="evidence" value="ECO:0000318"/>
    <property type="project" value="GO_Central"/>
</dbReference>
<dbReference type="GO" id="GO:0051225">
    <property type="term" value="P:spindle assembly"/>
    <property type="evidence" value="ECO:0000318"/>
    <property type="project" value="GO_Central"/>
</dbReference>
<dbReference type="FunFam" id="1.20.5.1430:FF:000002">
    <property type="entry name" value="microtubule-associated protein RP/EB family member 2 isoform X1"/>
    <property type="match status" value="1"/>
</dbReference>
<dbReference type="FunFam" id="1.10.418.10:FF:000007">
    <property type="entry name" value="Microtubule-associated protein, RP/EB family, member 2"/>
    <property type="match status" value="1"/>
</dbReference>
<dbReference type="Gene3D" id="1.20.5.1430">
    <property type="match status" value="1"/>
</dbReference>
<dbReference type="Gene3D" id="1.10.418.10">
    <property type="entry name" value="Calponin-like domain"/>
    <property type="match status" value="1"/>
</dbReference>
<dbReference type="InterPro" id="IPR001715">
    <property type="entry name" value="CH_dom"/>
</dbReference>
<dbReference type="InterPro" id="IPR036872">
    <property type="entry name" value="CH_dom_sf"/>
</dbReference>
<dbReference type="InterPro" id="IPR004953">
    <property type="entry name" value="EB1_C"/>
</dbReference>
<dbReference type="InterPro" id="IPR036133">
    <property type="entry name" value="EB1_C_sf"/>
</dbReference>
<dbReference type="InterPro" id="IPR027328">
    <property type="entry name" value="MAPRE"/>
</dbReference>
<dbReference type="PANTHER" id="PTHR10623">
    <property type="entry name" value="MICROTUBULE-ASSOCIATED PROTEIN RP/EB FAMILY MEMBER"/>
    <property type="match status" value="1"/>
</dbReference>
<dbReference type="Pfam" id="PF00307">
    <property type="entry name" value="CH"/>
    <property type="match status" value="1"/>
</dbReference>
<dbReference type="Pfam" id="PF03271">
    <property type="entry name" value="EB1"/>
    <property type="match status" value="1"/>
</dbReference>
<dbReference type="SUPFAM" id="SSF47576">
    <property type="entry name" value="Calponin-homology domain, CH-domain"/>
    <property type="match status" value="1"/>
</dbReference>
<dbReference type="SUPFAM" id="SSF140612">
    <property type="entry name" value="EB1 dimerisation domain-like"/>
    <property type="match status" value="1"/>
</dbReference>
<dbReference type="PROSITE" id="PS50021">
    <property type="entry name" value="CH"/>
    <property type="match status" value="1"/>
</dbReference>
<dbReference type="PROSITE" id="PS51230">
    <property type="entry name" value="EB1_C"/>
    <property type="match status" value="1"/>
</dbReference>
<protein>
    <recommendedName>
        <fullName>Microtubule-associated protein RP/EB family member 2</fullName>
    </recommendedName>
</protein>
<proteinExistence type="evidence at protein level"/>
<name>MARE2_RAT</name>
<accession>Q3B8Q0</accession>
<keyword id="KW-0131">Cell cycle</keyword>
<keyword id="KW-0132">Cell division</keyword>
<keyword id="KW-0963">Cytoplasm</keyword>
<keyword id="KW-0206">Cytoskeleton</keyword>
<keyword id="KW-0493">Microtubule</keyword>
<keyword id="KW-0498">Mitosis</keyword>
<keyword id="KW-0597">Phosphoprotein</keyword>
<keyword id="KW-1185">Reference proteome</keyword>
<keyword id="KW-0832">Ubl conjugation</keyword>
<evidence type="ECO:0000250" key="1"/>
<evidence type="ECO:0000250" key="2">
    <source>
        <dbReference type="UniProtKB" id="Q15555"/>
    </source>
</evidence>
<evidence type="ECO:0000250" key="3">
    <source>
        <dbReference type="UniProtKB" id="Q8R001"/>
    </source>
</evidence>
<evidence type="ECO:0000255" key="4">
    <source>
        <dbReference type="PROSITE-ProRule" id="PRU00044"/>
    </source>
</evidence>
<evidence type="ECO:0000255" key="5">
    <source>
        <dbReference type="PROSITE-ProRule" id="PRU00576"/>
    </source>
</evidence>
<evidence type="ECO:0000256" key="6">
    <source>
        <dbReference type="SAM" id="MobiDB-lite"/>
    </source>
</evidence>
<evidence type="ECO:0000305" key="7"/>
<evidence type="ECO:0007744" key="8">
    <source>
    </source>
</evidence>